<name>PHS_NOVAD</name>
<organism>
    <name type="scientific">Novosphingobium aromaticivorans (strain ATCC 700278 / DSM 12444 / CCUG 56034 / CIP 105152 / NBRC 16084 / F199)</name>
    <dbReference type="NCBI Taxonomy" id="279238"/>
    <lineage>
        <taxon>Bacteria</taxon>
        <taxon>Pseudomonadati</taxon>
        <taxon>Pseudomonadota</taxon>
        <taxon>Alphaproteobacteria</taxon>
        <taxon>Sphingomonadales</taxon>
        <taxon>Sphingomonadaceae</taxon>
        <taxon>Novosphingobium</taxon>
    </lineage>
</organism>
<comment type="catalytic activity">
    <reaction evidence="1">
        <text>(4aS,6R)-4a-hydroxy-L-erythro-5,6,7,8-tetrahydrobiopterin = (6R)-L-erythro-6,7-dihydrobiopterin + H2O</text>
        <dbReference type="Rhea" id="RHEA:11920"/>
        <dbReference type="ChEBI" id="CHEBI:15377"/>
        <dbReference type="ChEBI" id="CHEBI:15642"/>
        <dbReference type="ChEBI" id="CHEBI:43120"/>
        <dbReference type="EC" id="4.2.1.96"/>
    </reaction>
</comment>
<comment type="similarity">
    <text evidence="1">Belongs to the pterin-4-alpha-carbinolamine dehydratase family.</text>
</comment>
<proteinExistence type="inferred from homology"/>
<sequence length="96" mass="11009">MTVARLTDAERDALLAELPEWALREDGLAIVRTFRFADFSQAWGFMNRVALHAEKTDHHPEWFNVYNRVEVTLTTHDADGLSARDADMARAMESFL</sequence>
<protein>
    <recommendedName>
        <fullName evidence="1">Putative pterin-4-alpha-carbinolamine dehydratase</fullName>
        <shortName evidence="1">PHS</shortName>
        <ecNumber evidence="1">4.2.1.96</ecNumber>
    </recommendedName>
    <alternativeName>
        <fullName evidence="1">4-alpha-hydroxy-tetrahydropterin dehydratase</fullName>
    </alternativeName>
    <alternativeName>
        <fullName evidence="1">Pterin carbinolamine dehydratase</fullName>
        <shortName evidence="1">PCD</shortName>
    </alternativeName>
</protein>
<evidence type="ECO:0000255" key="1">
    <source>
        <dbReference type="HAMAP-Rule" id="MF_00434"/>
    </source>
</evidence>
<accession>Q2G9B0</accession>
<dbReference type="EC" id="4.2.1.96" evidence="1"/>
<dbReference type="EMBL" id="CP000248">
    <property type="protein sequence ID" value="ABD25563.1"/>
    <property type="molecule type" value="Genomic_DNA"/>
</dbReference>
<dbReference type="RefSeq" id="WP_011444777.1">
    <property type="nucleotide sequence ID" value="NC_007794.1"/>
</dbReference>
<dbReference type="SMR" id="Q2G9B0"/>
<dbReference type="STRING" id="279238.Saro_1118"/>
<dbReference type="KEGG" id="nar:Saro_1118"/>
<dbReference type="eggNOG" id="COG2154">
    <property type="taxonomic scope" value="Bacteria"/>
</dbReference>
<dbReference type="HOGENOM" id="CLU_081974_3_2_5"/>
<dbReference type="Proteomes" id="UP000009134">
    <property type="component" value="Chromosome"/>
</dbReference>
<dbReference type="GO" id="GO:0008124">
    <property type="term" value="F:4-alpha-hydroxytetrahydrobiopterin dehydratase activity"/>
    <property type="evidence" value="ECO:0007669"/>
    <property type="project" value="UniProtKB-UniRule"/>
</dbReference>
<dbReference type="GO" id="GO:0006729">
    <property type="term" value="P:tetrahydrobiopterin biosynthetic process"/>
    <property type="evidence" value="ECO:0007669"/>
    <property type="project" value="InterPro"/>
</dbReference>
<dbReference type="CDD" id="cd00914">
    <property type="entry name" value="PCD_DCoH_subfamily_b"/>
    <property type="match status" value="1"/>
</dbReference>
<dbReference type="Gene3D" id="3.30.1360.20">
    <property type="entry name" value="Transcriptional coactivator/pterin dehydratase"/>
    <property type="match status" value="1"/>
</dbReference>
<dbReference type="HAMAP" id="MF_00434">
    <property type="entry name" value="Pterin_4_alpha"/>
    <property type="match status" value="1"/>
</dbReference>
<dbReference type="InterPro" id="IPR036428">
    <property type="entry name" value="PCD_sf"/>
</dbReference>
<dbReference type="InterPro" id="IPR001533">
    <property type="entry name" value="Pterin_deHydtase"/>
</dbReference>
<dbReference type="NCBIfam" id="NF002017">
    <property type="entry name" value="PRK00823.1-2"/>
    <property type="match status" value="1"/>
</dbReference>
<dbReference type="NCBIfam" id="NF002018">
    <property type="entry name" value="PRK00823.1-3"/>
    <property type="match status" value="1"/>
</dbReference>
<dbReference type="PANTHER" id="PTHR12599">
    <property type="entry name" value="PTERIN-4-ALPHA-CARBINOLAMINE DEHYDRATASE"/>
    <property type="match status" value="1"/>
</dbReference>
<dbReference type="PANTHER" id="PTHR12599:SF0">
    <property type="entry name" value="PTERIN-4-ALPHA-CARBINOLAMINE DEHYDRATASE"/>
    <property type="match status" value="1"/>
</dbReference>
<dbReference type="Pfam" id="PF01329">
    <property type="entry name" value="Pterin_4a"/>
    <property type="match status" value="1"/>
</dbReference>
<dbReference type="SUPFAM" id="SSF55248">
    <property type="entry name" value="PCD-like"/>
    <property type="match status" value="1"/>
</dbReference>
<reference key="1">
    <citation type="submission" date="2006-01" db="EMBL/GenBank/DDBJ databases">
        <title>Complete sequence of Novosphingobium aromaticivorans DSM 12444.</title>
        <authorList>
            <consortium name="US DOE Joint Genome Institute"/>
            <person name="Copeland A."/>
            <person name="Lucas S."/>
            <person name="Lapidus A."/>
            <person name="Barry K."/>
            <person name="Detter J.C."/>
            <person name="Glavina T."/>
            <person name="Hammon N."/>
            <person name="Israni S."/>
            <person name="Pitluck S."/>
            <person name="Chain P."/>
            <person name="Malfatti S."/>
            <person name="Shin M."/>
            <person name="Vergez L."/>
            <person name="Schmutz J."/>
            <person name="Larimer F."/>
            <person name="Land M."/>
            <person name="Kyrpides N."/>
            <person name="Ivanova N."/>
            <person name="Fredrickson J."/>
            <person name="Balkwill D."/>
            <person name="Romine M.F."/>
            <person name="Richardson P."/>
        </authorList>
    </citation>
    <scope>NUCLEOTIDE SEQUENCE [LARGE SCALE GENOMIC DNA]</scope>
    <source>
        <strain>ATCC 700278 / DSM 12444 / CCUG 56034 / CIP 105152 / NBRC 16084 / F199</strain>
    </source>
</reference>
<gene>
    <name type="ordered locus">Saro_1118</name>
</gene>
<keyword id="KW-0456">Lyase</keyword>
<keyword id="KW-1185">Reference proteome</keyword>
<feature type="chain" id="PRO_1000192921" description="Putative pterin-4-alpha-carbinolamine dehydratase">
    <location>
        <begin position="1"/>
        <end position="96"/>
    </location>
</feature>